<comment type="subcellular location">
    <subcellularLocation>
        <location evidence="1">Cell inner membrane</location>
        <topology evidence="1">Multi-pass membrane protein</topology>
    </subcellularLocation>
</comment>
<comment type="similarity">
    <text evidence="3">To B.subtilis YvsG.</text>
</comment>
<evidence type="ECO:0000250" key="1"/>
<evidence type="ECO:0000255" key="2"/>
<evidence type="ECO:0000305" key="3"/>
<proteinExistence type="inferred from homology"/>
<keyword id="KW-0997">Cell inner membrane</keyword>
<keyword id="KW-1003">Cell membrane</keyword>
<keyword id="KW-0472">Membrane</keyword>
<keyword id="KW-1185">Reference proteome</keyword>
<keyword id="KW-0812">Transmembrane</keyword>
<keyword id="KW-1133">Transmembrane helix</keyword>
<organism>
    <name type="scientific">Shigella flexneri</name>
    <dbReference type="NCBI Taxonomy" id="623"/>
    <lineage>
        <taxon>Bacteria</taxon>
        <taxon>Pseudomonadati</taxon>
        <taxon>Pseudomonadota</taxon>
        <taxon>Gammaproteobacteria</taxon>
        <taxon>Enterobacterales</taxon>
        <taxon>Enterobacteriaceae</taxon>
        <taxon>Shigella</taxon>
    </lineage>
</organism>
<reference key="1">
    <citation type="journal article" date="2002" name="Nucleic Acids Res.">
        <title>Genome sequence of Shigella flexneri 2a: insights into pathogenicity through comparison with genomes of Escherichia coli K12 and O157.</title>
        <authorList>
            <person name="Jin Q."/>
            <person name="Yuan Z."/>
            <person name="Xu J."/>
            <person name="Wang Y."/>
            <person name="Shen Y."/>
            <person name="Lu W."/>
            <person name="Wang J."/>
            <person name="Liu H."/>
            <person name="Yang J."/>
            <person name="Yang F."/>
            <person name="Zhang X."/>
            <person name="Zhang J."/>
            <person name="Yang G."/>
            <person name="Wu H."/>
            <person name="Qu D."/>
            <person name="Dong J."/>
            <person name="Sun L."/>
            <person name="Xue Y."/>
            <person name="Zhao A."/>
            <person name="Gao Y."/>
            <person name="Zhu J."/>
            <person name="Kan B."/>
            <person name="Ding K."/>
            <person name="Chen S."/>
            <person name="Cheng H."/>
            <person name="Yao Z."/>
            <person name="He B."/>
            <person name="Chen R."/>
            <person name="Ma D."/>
            <person name="Qiang B."/>
            <person name="Wen Y."/>
            <person name="Hou Y."/>
            <person name="Yu J."/>
        </authorList>
    </citation>
    <scope>NUCLEOTIDE SEQUENCE [LARGE SCALE GENOMIC DNA]</scope>
    <source>
        <strain>301 / Serotype 2a</strain>
    </source>
</reference>
<reference key="2">
    <citation type="journal article" date="2003" name="Infect. Immun.">
        <title>Complete genome sequence and comparative genomics of Shigella flexneri serotype 2a strain 2457T.</title>
        <authorList>
            <person name="Wei J."/>
            <person name="Goldberg M.B."/>
            <person name="Burland V."/>
            <person name="Venkatesan M.M."/>
            <person name="Deng W."/>
            <person name="Fournier G."/>
            <person name="Mayhew G.F."/>
            <person name="Plunkett G. III"/>
            <person name="Rose D.J."/>
            <person name="Darling A."/>
            <person name="Mau B."/>
            <person name="Perna N.T."/>
            <person name="Payne S.M."/>
            <person name="Runyen-Janecky L.J."/>
            <person name="Zhou S."/>
            <person name="Schwartz D.C."/>
            <person name="Blattner F.R."/>
        </authorList>
    </citation>
    <scope>NUCLEOTIDE SEQUENCE [LARGE SCALE GENOMIC DNA]</scope>
    <source>
        <strain>ATCC 700930 / 2457T / Serotype 2a</strain>
    </source>
</reference>
<protein>
    <recommendedName>
        <fullName>Inner membrane protein YdjM</fullName>
    </recommendedName>
</protein>
<name>YDJM_SHIFL</name>
<accession>P64482</accession>
<accession>P76209</accession>
<feature type="chain" id="PRO_0000013858" description="Inner membrane protein YdjM">
    <location>
        <begin position="1"/>
        <end position="196"/>
    </location>
</feature>
<feature type="topological domain" description="Periplasmic" evidence="2">
    <location>
        <begin position="1"/>
        <end position="23"/>
    </location>
</feature>
<feature type="transmembrane region" description="Helical" evidence="2">
    <location>
        <begin position="24"/>
        <end position="44"/>
    </location>
</feature>
<feature type="topological domain" description="Cytoplasmic" evidence="2">
    <location>
        <begin position="45"/>
        <end position="77"/>
    </location>
</feature>
<feature type="transmembrane region" description="Helical" evidence="2">
    <location>
        <begin position="78"/>
        <end position="98"/>
    </location>
</feature>
<feature type="topological domain" description="Periplasmic" evidence="2">
    <location>
        <begin position="99"/>
        <end position="106"/>
    </location>
</feature>
<feature type="transmembrane region" description="Helical" evidence="2">
    <location>
        <begin position="107"/>
        <end position="127"/>
    </location>
</feature>
<feature type="topological domain" description="Cytoplasmic" evidence="2">
    <location>
        <begin position="128"/>
        <end position="149"/>
    </location>
</feature>
<feature type="transmembrane region" description="Helical" evidence="2">
    <location>
        <begin position="150"/>
        <end position="170"/>
    </location>
</feature>
<feature type="topological domain" description="Periplasmic" evidence="2">
    <location>
        <begin position="171"/>
        <end position="196"/>
    </location>
</feature>
<sequence>MTAEGHLLFSIACAVFAKNAELTPVLAQGDWWHIVPSAILTCLLPDIDHPKSFLGQRLKWISKPIARAFGHRGFTHSLLAVFALLATFYLKVPEGWFIPADALQGMVLGYLSHILADMLTPAGVPLLWPCRWRFRLPILVPQKGNQLERFICMALFVWSVWMPHSLPENSAVRWSSQMINTLQIQFHRLIKHQVEY</sequence>
<dbReference type="EMBL" id="AE005674">
    <property type="protein sequence ID" value="AAN43093.2"/>
    <property type="molecule type" value="Genomic_DNA"/>
</dbReference>
<dbReference type="EMBL" id="AE014073">
    <property type="protein sequence ID" value="AAP16983.1"/>
    <property type="molecule type" value="Genomic_DNA"/>
</dbReference>
<dbReference type="RefSeq" id="NP_707386.2">
    <property type="nucleotide sequence ID" value="NC_004337.2"/>
</dbReference>
<dbReference type="RefSeq" id="WP_001297653.1">
    <property type="nucleotide sequence ID" value="NZ_WPGW01000155.1"/>
</dbReference>
<dbReference type="STRING" id="198214.SF1502"/>
<dbReference type="PaxDb" id="198214-SF1502"/>
<dbReference type="GeneID" id="1024675"/>
<dbReference type="KEGG" id="sfl:SF1502"/>
<dbReference type="KEGG" id="sfx:S1619"/>
<dbReference type="PATRIC" id="fig|198214.7.peg.1774"/>
<dbReference type="HOGENOM" id="CLU_097802_2_1_6"/>
<dbReference type="Proteomes" id="UP000001006">
    <property type="component" value="Chromosome"/>
</dbReference>
<dbReference type="Proteomes" id="UP000002673">
    <property type="component" value="Chromosome"/>
</dbReference>
<dbReference type="GO" id="GO:0005886">
    <property type="term" value="C:plasma membrane"/>
    <property type="evidence" value="ECO:0007669"/>
    <property type="project" value="UniProtKB-SubCell"/>
</dbReference>
<dbReference type="InterPro" id="IPR016956">
    <property type="entry name" value="YdjM"/>
</dbReference>
<dbReference type="InterPro" id="IPR007404">
    <property type="entry name" value="YdjM-like"/>
</dbReference>
<dbReference type="NCBIfam" id="NF008651">
    <property type="entry name" value="PRK11648.1"/>
    <property type="match status" value="1"/>
</dbReference>
<dbReference type="PANTHER" id="PTHR35531">
    <property type="entry name" value="INNER MEMBRANE PROTEIN YBCI-RELATED"/>
    <property type="match status" value="1"/>
</dbReference>
<dbReference type="PANTHER" id="PTHR35531:SF1">
    <property type="entry name" value="INNER MEMBRANE PROTEIN YBCI-RELATED"/>
    <property type="match status" value="1"/>
</dbReference>
<dbReference type="Pfam" id="PF04307">
    <property type="entry name" value="YdjM"/>
    <property type="match status" value="1"/>
</dbReference>
<dbReference type="PIRSF" id="PIRSF030780">
    <property type="entry name" value="Md_memb_hyd_prd"/>
    <property type="match status" value="1"/>
</dbReference>
<gene>
    <name type="primary">ydjM</name>
    <name type="ordered locus">SF1502</name>
    <name type="ordered locus">S1619</name>
</gene>